<feature type="chain" id="PRO_0000342220" description="LL-diaminopimelate aminotransferase">
    <location>
        <begin position="1"/>
        <end position="394"/>
    </location>
</feature>
<feature type="binding site" evidence="1">
    <location>
        <position position="14"/>
    </location>
    <ligand>
        <name>substrate</name>
    </ligand>
</feature>
<feature type="binding site" evidence="1">
    <location>
        <position position="41"/>
    </location>
    <ligand>
        <name>substrate</name>
    </ligand>
</feature>
<feature type="binding site" evidence="1">
    <location>
        <position position="71"/>
    </location>
    <ligand>
        <name>pyridoxal 5'-phosphate</name>
        <dbReference type="ChEBI" id="CHEBI:597326"/>
    </ligand>
</feature>
<feature type="binding site" evidence="1">
    <location>
        <begin position="104"/>
        <end position="105"/>
    </location>
    <ligand>
        <name>pyridoxal 5'-phosphate</name>
        <dbReference type="ChEBI" id="CHEBI:597326"/>
    </ligand>
</feature>
<feature type="binding site" evidence="1">
    <location>
        <position position="105"/>
    </location>
    <ligand>
        <name>substrate</name>
    </ligand>
</feature>
<feature type="binding site" evidence="1">
    <location>
        <position position="128"/>
    </location>
    <ligand>
        <name>pyridoxal 5'-phosphate</name>
        <dbReference type="ChEBI" id="CHEBI:597326"/>
    </ligand>
</feature>
<feature type="binding site" evidence="1">
    <location>
        <position position="128"/>
    </location>
    <ligand>
        <name>substrate</name>
    </ligand>
</feature>
<feature type="binding site" evidence="1">
    <location>
        <position position="174"/>
    </location>
    <ligand>
        <name>pyridoxal 5'-phosphate</name>
        <dbReference type="ChEBI" id="CHEBI:597326"/>
    </ligand>
</feature>
<feature type="binding site" evidence="1">
    <location>
        <position position="174"/>
    </location>
    <ligand>
        <name>substrate</name>
    </ligand>
</feature>
<feature type="binding site" evidence="1">
    <location>
        <position position="205"/>
    </location>
    <ligand>
        <name>pyridoxal 5'-phosphate</name>
        <dbReference type="ChEBI" id="CHEBI:597326"/>
    </ligand>
</feature>
<feature type="binding site" evidence="1">
    <location>
        <begin position="233"/>
        <end position="235"/>
    </location>
    <ligand>
        <name>pyridoxal 5'-phosphate</name>
        <dbReference type="ChEBI" id="CHEBI:597326"/>
    </ligand>
</feature>
<feature type="binding site" evidence="1">
    <location>
        <position position="244"/>
    </location>
    <ligand>
        <name>pyridoxal 5'-phosphate</name>
        <dbReference type="ChEBI" id="CHEBI:597326"/>
    </ligand>
</feature>
<feature type="binding site" evidence="1">
    <location>
        <position position="275"/>
    </location>
    <ligand>
        <name>pyridoxal 5'-phosphate</name>
        <dbReference type="ChEBI" id="CHEBI:597326"/>
    </ligand>
</feature>
<feature type="binding site" evidence="1">
    <location>
        <position position="275"/>
    </location>
    <ligand>
        <name>substrate</name>
    </ligand>
</feature>
<feature type="binding site" evidence="1">
    <location>
        <position position="369"/>
    </location>
    <ligand>
        <name>substrate</name>
    </ligand>
</feature>
<feature type="modified residue" description="N6-(pyridoxal phosphate)lysine" evidence="1">
    <location>
        <position position="236"/>
    </location>
</feature>
<keyword id="KW-0032">Aminotransferase</keyword>
<keyword id="KW-0663">Pyridoxal phosphate</keyword>
<keyword id="KW-0808">Transferase</keyword>
<protein>
    <recommendedName>
        <fullName evidence="1">LL-diaminopimelate aminotransferase</fullName>
        <shortName evidence="1">DAP-AT</shortName>
        <shortName evidence="1">DAP-aminotransferase</shortName>
        <shortName evidence="1">LL-DAP-aminotransferase</shortName>
        <ecNumber evidence="1">2.6.1.83</ecNumber>
    </recommendedName>
</protein>
<gene>
    <name evidence="1" type="primary">dapL</name>
    <name type="ordered locus">CTA_0425</name>
</gene>
<name>DAPAT_CHLTA</name>
<organism>
    <name type="scientific">Chlamydia trachomatis serovar A (strain ATCC VR-571B / DSM 19440 / HAR-13)</name>
    <dbReference type="NCBI Taxonomy" id="315277"/>
    <lineage>
        <taxon>Bacteria</taxon>
        <taxon>Pseudomonadati</taxon>
        <taxon>Chlamydiota</taxon>
        <taxon>Chlamydiia</taxon>
        <taxon>Chlamydiales</taxon>
        <taxon>Chlamydiaceae</taxon>
        <taxon>Chlamydia/Chlamydophila group</taxon>
        <taxon>Chlamydia</taxon>
    </lineage>
</organism>
<evidence type="ECO:0000255" key="1">
    <source>
        <dbReference type="HAMAP-Rule" id="MF_01642"/>
    </source>
</evidence>
<proteinExistence type="inferred from homology"/>
<comment type="function">
    <text evidence="1">Involved in the synthesis of meso-diaminopimelate (m-DAP or DL-DAP), required for both lysine and peptidoglycan biosynthesis. Catalyzes the direct conversion of tetrahydrodipicolinate to LL-diaminopimelate.</text>
</comment>
<comment type="catalytic activity">
    <reaction evidence="1">
        <text>(2S,6S)-2,6-diaminopimelate + 2-oxoglutarate = (S)-2,3,4,5-tetrahydrodipicolinate + L-glutamate + H2O + H(+)</text>
        <dbReference type="Rhea" id="RHEA:23988"/>
        <dbReference type="ChEBI" id="CHEBI:15377"/>
        <dbReference type="ChEBI" id="CHEBI:15378"/>
        <dbReference type="ChEBI" id="CHEBI:16810"/>
        <dbReference type="ChEBI" id="CHEBI:16845"/>
        <dbReference type="ChEBI" id="CHEBI:29985"/>
        <dbReference type="ChEBI" id="CHEBI:57609"/>
        <dbReference type="EC" id="2.6.1.83"/>
    </reaction>
</comment>
<comment type="cofactor">
    <cofactor evidence="1">
        <name>pyridoxal 5'-phosphate</name>
        <dbReference type="ChEBI" id="CHEBI:597326"/>
    </cofactor>
</comment>
<comment type="pathway">
    <text evidence="1">Amino-acid biosynthesis; L-lysine biosynthesis via DAP pathway; LL-2,6-diaminopimelate from (S)-tetrahydrodipicolinate (aminotransferase route): step 1/1.</text>
</comment>
<comment type="subunit">
    <text evidence="1">Homodimer.</text>
</comment>
<comment type="similarity">
    <text evidence="1">Belongs to the class-I pyridoxal-phosphate-dependent aminotransferase family. LL-diaminopimelate aminotransferase subfamily.</text>
</comment>
<dbReference type="EC" id="2.6.1.83" evidence="1"/>
<dbReference type="EMBL" id="CP000051">
    <property type="protein sequence ID" value="AAX50659.1"/>
    <property type="molecule type" value="Genomic_DNA"/>
</dbReference>
<dbReference type="RefSeq" id="WP_009871742.1">
    <property type="nucleotide sequence ID" value="NC_007429.1"/>
</dbReference>
<dbReference type="SMR" id="Q3KLW3"/>
<dbReference type="KEGG" id="cta:CTA_0425"/>
<dbReference type="HOGENOM" id="CLU_051433_0_0_0"/>
<dbReference type="UniPathway" id="UPA00034">
    <property type="reaction ID" value="UER00466"/>
</dbReference>
<dbReference type="Proteomes" id="UP000002532">
    <property type="component" value="Chromosome"/>
</dbReference>
<dbReference type="GO" id="GO:0010285">
    <property type="term" value="F:L,L-diaminopimelate aminotransferase activity"/>
    <property type="evidence" value="ECO:0007669"/>
    <property type="project" value="UniProtKB-UniRule"/>
</dbReference>
<dbReference type="GO" id="GO:0030170">
    <property type="term" value="F:pyridoxal phosphate binding"/>
    <property type="evidence" value="ECO:0007669"/>
    <property type="project" value="UniProtKB-UniRule"/>
</dbReference>
<dbReference type="GO" id="GO:0033362">
    <property type="term" value="P:lysine biosynthetic process via diaminopimelate, diaminopimelate-aminotransferase pathway"/>
    <property type="evidence" value="ECO:0007669"/>
    <property type="project" value="UniProtKB-UniRule"/>
</dbReference>
<dbReference type="CDD" id="cd00609">
    <property type="entry name" value="AAT_like"/>
    <property type="match status" value="1"/>
</dbReference>
<dbReference type="FunFam" id="3.40.640.10:FF:000099">
    <property type="entry name" value="LL-diaminopimelate aminotransferase, chloroplastic"/>
    <property type="match status" value="1"/>
</dbReference>
<dbReference type="Gene3D" id="3.90.1150.10">
    <property type="entry name" value="Aspartate Aminotransferase, domain 1"/>
    <property type="match status" value="1"/>
</dbReference>
<dbReference type="Gene3D" id="3.40.640.10">
    <property type="entry name" value="Type I PLP-dependent aspartate aminotransferase-like (Major domain)"/>
    <property type="match status" value="1"/>
</dbReference>
<dbReference type="HAMAP" id="MF_01642">
    <property type="entry name" value="DapL_aminotrans_1"/>
    <property type="match status" value="1"/>
</dbReference>
<dbReference type="InterPro" id="IPR004839">
    <property type="entry name" value="Aminotransferase_I/II_large"/>
</dbReference>
<dbReference type="InterPro" id="IPR019942">
    <property type="entry name" value="DapL/ALD1"/>
</dbReference>
<dbReference type="InterPro" id="IPR004838">
    <property type="entry name" value="NHTrfase_class1_PyrdxlP-BS"/>
</dbReference>
<dbReference type="InterPro" id="IPR015424">
    <property type="entry name" value="PyrdxlP-dep_Trfase"/>
</dbReference>
<dbReference type="InterPro" id="IPR015421">
    <property type="entry name" value="PyrdxlP-dep_Trfase_major"/>
</dbReference>
<dbReference type="InterPro" id="IPR015422">
    <property type="entry name" value="PyrdxlP-dep_Trfase_small"/>
</dbReference>
<dbReference type="NCBIfam" id="TIGR03542">
    <property type="entry name" value="DAPAT_plant"/>
    <property type="match status" value="1"/>
</dbReference>
<dbReference type="PANTHER" id="PTHR43144">
    <property type="entry name" value="AMINOTRANSFERASE"/>
    <property type="match status" value="1"/>
</dbReference>
<dbReference type="Pfam" id="PF00155">
    <property type="entry name" value="Aminotran_1_2"/>
    <property type="match status" value="1"/>
</dbReference>
<dbReference type="SUPFAM" id="SSF53383">
    <property type="entry name" value="PLP-dependent transferases"/>
    <property type="match status" value="1"/>
</dbReference>
<dbReference type="PROSITE" id="PS00105">
    <property type="entry name" value="AA_TRANSFER_CLASS_1"/>
    <property type="match status" value="1"/>
</dbReference>
<reference key="1">
    <citation type="journal article" date="2005" name="Infect. Immun.">
        <title>Comparative genomic analysis of Chlamydia trachomatis oculotropic and genitotropic strains.</title>
        <authorList>
            <person name="Carlson J.H."/>
            <person name="Porcella S.F."/>
            <person name="McClarty G."/>
            <person name="Caldwell H.D."/>
        </authorList>
    </citation>
    <scope>NUCLEOTIDE SEQUENCE [LARGE SCALE GENOMIC DNA]</scope>
    <source>
        <strain>ATCC VR-571B / DSM 19440 / HAR-13</strain>
    </source>
</reference>
<sequence>MKRNPHFVSLTKNYLFADLQKRVAQFRLENPQHTVINLSIGDTTQPLNASVAEAFASSIARLSSPTTCRGYGPDFGLPALRQKLSEDFYRGFVDAKEIFISDGAKVDLFRLLSFFGPNQTVAIQDPSYPAYLDIARLTGAKEIIALPCLQENAFFPEFPEDTHIDILCLCSPNNPTGTVLNKDQLRAIVHYAIEHEILILFDAAYSTFISDPSLPKSIFEIPDARFCAIEINSFSKPLGFAGIRLGWTVIPQELTYADGHFVIQDWERFLSTTFNGASIPAQEAGVAGLSILPQLEAIHYYRENSDLLRKALLATGFEVFGGEHAPYLWVKPTQANISDRDLFDFFLREYHIAITPGIGFGRSGSGFVRFSSLGKREDILAACERLQMAPALQS</sequence>
<accession>Q3KLW3</accession>